<proteinExistence type="inferred from homology"/>
<evidence type="ECO:0000255" key="1">
    <source>
        <dbReference type="HAMAP-Rule" id="MF_00145"/>
    </source>
</evidence>
<keyword id="KW-0067">ATP-binding</keyword>
<keyword id="KW-0963">Cytoplasm</keyword>
<keyword id="KW-0324">Glycolysis</keyword>
<keyword id="KW-0418">Kinase</keyword>
<keyword id="KW-0547">Nucleotide-binding</keyword>
<keyword id="KW-0808">Transferase</keyword>
<feature type="chain" id="PRO_1000071471" description="Phosphoglycerate kinase">
    <location>
        <begin position="1"/>
        <end position="403"/>
    </location>
</feature>
<feature type="binding site" evidence="1">
    <location>
        <begin position="21"/>
        <end position="23"/>
    </location>
    <ligand>
        <name>substrate</name>
    </ligand>
</feature>
<feature type="binding site" evidence="1">
    <location>
        <position position="36"/>
    </location>
    <ligand>
        <name>substrate</name>
    </ligand>
</feature>
<feature type="binding site" evidence="1">
    <location>
        <begin position="59"/>
        <end position="62"/>
    </location>
    <ligand>
        <name>substrate</name>
    </ligand>
</feature>
<feature type="binding site" evidence="1">
    <location>
        <position position="119"/>
    </location>
    <ligand>
        <name>substrate</name>
    </ligand>
</feature>
<feature type="binding site" evidence="1">
    <location>
        <position position="159"/>
    </location>
    <ligand>
        <name>substrate</name>
    </ligand>
</feature>
<feature type="binding site" evidence="1">
    <location>
        <position position="214"/>
    </location>
    <ligand>
        <name>ATP</name>
        <dbReference type="ChEBI" id="CHEBI:30616"/>
    </ligand>
</feature>
<feature type="binding site" evidence="1">
    <location>
        <position position="301"/>
    </location>
    <ligand>
        <name>ATP</name>
        <dbReference type="ChEBI" id="CHEBI:30616"/>
    </ligand>
</feature>
<feature type="binding site" evidence="1">
    <location>
        <position position="332"/>
    </location>
    <ligand>
        <name>ATP</name>
        <dbReference type="ChEBI" id="CHEBI:30616"/>
    </ligand>
</feature>
<feature type="binding site" evidence="1">
    <location>
        <begin position="359"/>
        <end position="362"/>
    </location>
    <ligand>
        <name>ATP</name>
        <dbReference type="ChEBI" id="CHEBI:30616"/>
    </ligand>
</feature>
<reference key="1">
    <citation type="journal article" date="2008" name="J. Bacteriol.">
        <title>Genome sequence of Lactobacillus helveticus: an organism distinguished by selective gene loss and IS element expansion.</title>
        <authorList>
            <person name="Callanan M."/>
            <person name="Kaleta P."/>
            <person name="O'Callaghan J."/>
            <person name="O'Sullivan O."/>
            <person name="Jordan K."/>
            <person name="McAuliffe O."/>
            <person name="Sangrador-Vegas A."/>
            <person name="Slattery L."/>
            <person name="Fitzgerald G.F."/>
            <person name="Beresford T."/>
            <person name="Ross R.P."/>
        </authorList>
    </citation>
    <scope>NUCLEOTIDE SEQUENCE [LARGE SCALE GENOMIC DNA]</scope>
    <source>
        <strain>DPC 4571</strain>
    </source>
</reference>
<accession>A8YUE3</accession>
<dbReference type="EC" id="2.7.2.3" evidence="1"/>
<dbReference type="EMBL" id="CP000517">
    <property type="protein sequence ID" value="ABX26881.1"/>
    <property type="molecule type" value="Genomic_DNA"/>
</dbReference>
<dbReference type="RefSeq" id="WP_012211629.1">
    <property type="nucleotide sequence ID" value="NC_010080.1"/>
</dbReference>
<dbReference type="SMR" id="A8YUE3"/>
<dbReference type="KEGG" id="lhe:lhv_0744"/>
<dbReference type="eggNOG" id="COG0126">
    <property type="taxonomic scope" value="Bacteria"/>
</dbReference>
<dbReference type="HOGENOM" id="CLU_025427_0_2_9"/>
<dbReference type="UniPathway" id="UPA00109">
    <property type="reaction ID" value="UER00185"/>
</dbReference>
<dbReference type="Proteomes" id="UP000000790">
    <property type="component" value="Chromosome"/>
</dbReference>
<dbReference type="GO" id="GO:0005829">
    <property type="term" value="C:cytosol"/>
    <property type="evidence" value="ECO:0007669"/>
    <property type="project" value="TreeGrafter"/>
</dbReference>
<dbReference type="GO" id="GO:0043531">
    <property type="term" value="F:ADP binding"/>
    <property type="evidence" value="ECO:0007669"/>
    <property type="project" value="TreeGrafter"/>
</dbReference>
<dbReference type="GO" id="GO:0005524">
    <property type="term" value="F:ATP binding"/>
    <property type="evidence" value="ECO:0007669"/>
    <property type="project" value="UniProtKB-KW"/>
</dbReference>
<dbReference type="GO" id="GO:0004618">
    <property type="term" value="F:phosphoglycerate kinase activity"/>
    <property type="evidence" value="ECO:0007669"/>
    <property type="project" value="UniProtKB-UniRule"/>
</dbReference>
<dbReference type="GO" id="GO:0006094">
    <property type="term" value="P:gluconeogenesis"/>
    <property type="evidence" value="ECO:0007669"/>
    <property type="project" value="TreeGrafter"/>
</dbReference>
<dbReference type="GO" id="GO:0006096">
    <property type="term" value="P:glycolytic process"/>
    <property type="evidence" value="ECO:0007669"/>
    <property type="project" value="UniProtKB-UniRule"/>
</dbReference>
<dbReference type="CDD" id="cd00318">
    <property type="entry name" value="Phosphoglycerate_kinase"/>
    <property type="match status" value="1"/>
</dbReference>
<dbReference type="FunFam" id="3.40.50.1260:FF:000001">
    <property type="entry name" value="Phosphoglycerate kinase"/>
    <property type="match status" value="1"/>
</dbReference>
<dbReference type="FunFam" id="3.40.50.1260:FF:000008">
    <property type="entry name" value="Phosphoglycerate kinase"/>
    <property type="match status" value="1"/>
</dbReference>
<dbReference type="Gene3D" id="3.40.50.1260">
    <property type="entry name" value="Phosphoglycerate kinase, N-terminal domain"/>
    <property type="match status" value="2"/>
</dbReference>
<dbReference type="HAMAP" id="MF_00145">
    <property type="entry name" value="Phosphoglyc_kinase"/>
    <property type="match status" value="1"/>
</dbReference>
<dbReference type="InterPro" id="IPR001576">
    <property type="entry name" value="Phosphoglycerate_kinase"/>
</dbReference>
<dbReference type="InterPro" id="IPR015911">
    <property type="entry name" value="Phosphoglycerate_kinase_CS"/>
</dbReference>
<dbReference type="InterPro" id="IPR015824">
    <property type="entry name" value="Phosphoglycerate_kinase_N"/>
</dbReference>
<dbReference type="InterPro" id="IPR036043">
    <property type="entry name" value="Phosphoglycerate_kinase_sf"/>
</dbReference>
<dbReference type="PANTHER" id="PTHR11406">
    <property type="entry name" value="PHOSPHOGLYCERATE KINASE"/>
    <property type="match status" value="1"/>
</dbReference>
<dbReference type="PANTHER" id="PTHR11406:SF23">
    <property type="entry name" value="PHOSPHOGLYCERATE KINASE 1, CHLOROPLASTIC-RELATED"/>
    <property type="match status" value="1"/>
</dbReference>
<dbReference type="Pfam" id="PF00162">
    <property type="entry name" value="PGK"/>
    <property type="match status" value="1"/>
</dbReference>
<dbReference type="PIRSF" id="PIRSF000724">
    <property type="entry name" value="Pgk"/>
    <property type="match status" value="1"/>
</dbReference>
<dbReference type="PRINTS" id="PR00477">
    <property type="entry name" value="PHGLYCKINASE"/>
</dbReference>
<dbReference type="SUPFAM" id="SSF53748">
    <property type="entry name" value="Phosphoglycerate kinase"/>
    <property type="match status" value="1"/>
</dbReference>
<dbReference type="PROSITE" id="PS00111">
    <property type="entry name" value="PGLYCERATE_KINASE"/>
    <property type="match status" value="1"/>
</dbReference>
<name>PGK_LACH4</name>
<protein>
    <recommendedName>
        <fullName evidence="1">Phosphoglycerate kinase</fullName>
        <ecNumber evidence="1">2.7.2.3</ecNumber>
    </recommendedName>
</protein>
<gene>
    <name evidence="1" type="primary">pgk</name>
    <name type="ordered locus">lhv_0744</name>
</gene>
<comment type="catalytic activity">
    <reaction evidence="1">
        <text>(2R)-3-phosphoglycerate + ATP = (2R)-3-phospho-glyceroyl phosphate + ADP</text>
        <dbReference type="Rhea" id="RHEA:14801"/>
        <dbReference type="ChEBI" id="CHEBI:30616"/>
        <dbReference type="ChEBI" id="CHEBI:57604"/>
        <dbReference type="ChEBI" id="CHEBI:58272"/>
        <dbReference type="ChEBI" id="CHEBI:456216"/>
        <dbReference type="EC" id="2.7.2.3"/>
    </reaction>
</comment>
<comment type="pathway">
    <text evidence="1">Carbohydrate degradation; glycolysis; pyruvate from D-glyceraldehyde 3-phosphate: step 2/5.</text>
</comment>
<comment type="subunit">
    <text evidence="1">Monomer.</text>
</comment>
<comment type="subcellular location">
    <subcellularLocation>
        <location evidence="1">Cytoplasm</location>
    </subcellularLocation>
</comment>
<comment type="similarity">
    <text evidence="1">Belongs to the phosphoglycerate kinase family.</text>
</comment>
<sequence>MAKLIVDDLDVKGKKVLVRVDFNVPIKDGVIGDDNRIVAALPTIKYIIEHGGKAILLSHLGRVKSDADKKELSLKPVAERLSELLKKPVTFVPSNEGKEVEDAINNMKDGDVVVLENTRFQDIDNDFGKRESGNDPKLGEYWASLGDMFVNDAFGTAHRSHASNVGIATAMKGNGKLAAAGYLLEKEIKYLGDAVDNPVHPFVTILGGAKVSDKIGVINNLIPKSDHILIGGGMAYTFLAAQGHEIGKSLFEADKVDLAKELLEKAGDKIVLPVDNVAATEFSNDASREVVGDDIPDNMMGLDIGPKTIAKFKDILKDAKTVVWNGPMGAFEMPNFAEGTLEIGRALANLTDATTIIGGGDSTAAAKQLGIAPKISHISTGGGASLNYLEGKVLPGIACVQDK</sequence>
<organism>
    <name type="scientific">Lactobacillus helveticus (strain DPC 4571)</name>
    <dbReference type="NCBI Taxonomy" id="405566"/>
    <lineage>
        <taxon>Bacteria</taxon>
        <taxon>Bacillati</taxon>
        <taxon>Bacillota</taxon>
        <taxon>Bacilli</taxon>
        <taxon>Lactobacillales</taxon>
        <taxon>Lactobacillaceae</taxon>
        <taxon>Lactobacillus</taxon>
    </lineage>
</organism>